<evidence type="ECO:0000250" key="1"/>
<evidence type="ECO:0000250" key="2">
    <source>
        <dbReference type="UniProtKB" id="O48814"/>
    </source>
</evidence>
<evidence type="ECO:0000255" key="3"/>
<evidence type="ECO:0000255" key="4">
    <source>
        <dbReference type="PROSITE-ProRule" id="PRU00159"/>
    </source>
</evidence>
<evidence type="ECO:0000255" key="5">
    <source>
        <dbReference type="PROSITE-ProRule" id="PRU10027"/>
    </source>
</evidence>
<evidence type="ECO:0000256" key="6">
    <source>
        <dbReference type="SAM" id="MobiDB-lite"/>
    </source>
</evidence>
<evidence type="ECO:0000269" key="7">
    <source>
    </source>
</evidence>
<evidence type="ECO:0000305" key="8"/>
<accession>Q9S9M1</accession>
<accession>F4I2U0</accession>
<sequence>MKTKTYRFVCLVASVLTLQLMNGSSAATPPPPPNSKNSSTSCNRTCGGISIPFPFGIGGKDCYLNGWYEVVCNATTSGSSGTTVPFLSRINREVVNISLPEGNNEQYGVVHIKGPVTSLGCSSNTSQVPQKSLPDLNVTGKGSPYFITDENRLVAVGCGTKALMTDIESEILGCESSCKDSKSSQEVTNLLCDGYKCCQARIPVERPQAVGVNIESSGGDGCKVAFLSSKRYSPSNVTIPEQFHAGGYVVVELGWYFATTDSRFRNPLGCINLTYSGSYLSGDSCLCEYGYFSEMSYRNCYCSLGFTGNPYLRGGCIDNDDCKGPNICEEGTCVNVPGGYRCDPKPKIIKPAKPLVLQGVLLGLMGLLFLVVGTLGLIIFIKKRRRIISSRKFFKRNGGLLLKQQLTTTNDGNVDMSRLFSSEELKKATDNFSVKRVLGKGSQGTVYKGMMVDGKIIAVKRSKVVDEDKLEKFINEIILLSQINHRNIVKLIGCCLETEVPILVYEYIPNGDMFKRLHDESDDYAMTWEVRLRIAIEIAGALTYMHSAASFPIYHRDIKTTNILLDEKYGAKVSDFGTSRSVTIDQTHLTTMVAGTFGYMDPEYFLSSQYTDKSDVYSFGVVLVELITGEKPLSRIRSEEGRGLATHFLEAMKENRVIDIIDIRIKEESKLDQLMAVAKLARKCLSRKGIKRPNMREASLELERIRSSPEDLEAHIENDDEEDQVMEISRE</sequence>
<dbReference type="EC" id="2.7.11.-"/>
<dbReference type="EMBL" id="AC010924">
    <property type="protein sequence ID" value="AAF18511.1"/>
    <property type="status" value="ALT_INIT"/>
    <property type="molecule type" value="Genomic_DNA"/>
</dbReference>
<dbReference type="EMBL" id="CP002684">
    <property type="protein sequence ID" value="AEE29414.2"/>
    <property type="molecule type" value="Genomic_DNA"/>
</dbReference>
<dbReference type="PIR" id="D86296">
    <property type="entry name" value="D86296"/>
</dbReference>
<dbReference type="RefSeq" id="NP_173067.2">
    <property type="nucleotide sequence ID" value="NM_101483.2"/>
</dbReference>
<dbReference type="SMR" id="Q9S9M1"/>
<dbReference type="STRING" id="3702.Q9S9M1"/>
<dbReference type="GlyCosmos" id="Q9S9M1">
    <property type="glycosylation" value="8 sites, No reported glycans"/>
</dbReference>
<dbReference type="GlyGen" id="Q9S9M1">
    <property type="glycosylation" value="9 sites"/>
</dbReference>
<dbReference type="PaxDb" id="3702-AT1G16160.1"/>
<dbReference type="ProteomicsDB" id="242758"/>
<dbReference type="EnsemblPlants" id="AT1G16160.1">
    <property type="protein sequence ID" value="AT1G16160.1"/>
    <property type="gene ID" value="AT1G16160"/>
</dbReference>
<dbReference type="GeneID" id="838185"/>
<dbReference type="Gramene" id="AT1G16160.1">
    <property type="protein sequence ID" value="AT1G16160.1"/>
    <property type="gene ID" value="AT1G16160"/>
</dbReference>
<dbReference type="KEGG" id="ath:AT1G16160"/>
<dbReference type="Araport" id="AT1G16160"/>
<dbReference type="TAIR" id="AT1G16160">
    <property type="gene designation" value="WAKL5"/>
</dbReference>
<dbReference type="eggNOG" id="ENOG502RMXX">
    <property type="taxonomic scope" value="Eukaryota"/>
</dbReference>
<dbReference type="HOGENOM" id="CLU_000288_43_5_1"/>
<dbReference type="InParanoid" id="Q9S9M1"/>
<dbReference type="OMA" id="RCEDHIS"/>
<dbReference type="OrthoDB" id="4062651at2759"/>
<dbReference type="PhylomeDB" id="Q9S9M1"/>
<dbReference type="PRO" id="PR:Q9S9M1"/>
<dbReference type="Proteomes" id="UP000006548">
    <property type="component" value="Chromosome 1"/>
</dbReference>
<dbReference type="ExpressionAtlas" id="Q9S9M1">
    <property type="expression patterns" value="baseline and differential"/>
</dbReference>
<dbReference type="GO" id="GO:0016020">
    <property type="term" value="C:membrane"/>
    <property type="evidence" value="ECO:0007669"/>
    <property type="project" value="UniProtKB-SubCell"/>
</dbReference>
<dbReference type="GO" id="GO:0005524">
    <property type="term" value="F:ATP binding"/>
    <property type="evidence" value="ECO:0007669"/>
    <property type="project" value="UniProtKB-KW"/>
</dbReference>
<dbReference type="GO" id="GO:0005509">
    <property type="term" value="F:calcium ion binding"/>
    <property type="evidence" value="ECO:0007669"/>
    <property type="project" value="InterPro"/>
</dbReference>
<dbReference type="GO" id="GO:0030247">
    <property type="term" value="F:polysaccharide binding"/>
    <property type="evidence" value="ECO:0007669"/>
    <property type="project" value="InterPro"/>
</dbReference>
<dbReference type="GO" id="GO:0106310">
    <property type="term" value="F:protein serine kinase activity"/>
    <property type="evidence" value="ECO:0007669"/>
    <property type="project" value="RHEA"/>
</dbReference>
<dbReference type="GO" id="GO:0004674">
    <property type="term" value="F:protein serine/threonine kinase activity"/>
    <property type="evidence" value="ECO:0007669"/>
    <property type="project" value="UniProtKB-KW"/>
</dbReference>
<dbReference type="GO" id="GO:0007166">
    <property type="term" value="P:cell surface receptor signaling pathway"/>
    <property type="evidence" value="ECO:0007669"/>
    <property type="project" value="InterPro"/>
</dbReference>
<dbReference type="CDD" id="cd00054">
    <property type="entry name" value="EGF_CA"/>
    <property type="match status" value="1"/>
</dbReference>
<dbReference type="FunFam" id="1.10.510.10:FF:000084">
    <property type="entry name" value="Wall-associated receptor kinase 2"/>
    <property type="match status" value="1"/>
</dbReference>
<dbReference type="FunFam" id="3.30.200.20:FF:000043">
    <property type="entry name" value="Wall-associated receptor kinase 2"/>
    <property type="match status" value="1"/>
</dbReference>
<dbReference type="Gene3D" id="2.10.25.10">
    <property type="entry name" value="Laminin"/>
    <property type="match status" value="1"/>
</dbReference>
<dbReference type="Gene3D" id="3.30.200.20">
    <property type="entry name" value="Phosphorylase Kinase, domain 1"/>
    <property type="match status" value="1"/>
</dbReference>
<dbReference type="Gene3D" id="1.10.510.10">
    <property type="entry name" value="Transferase(Phosphotransferase) domain 1"/>
    <property type="match status" value="1"/>
</dbReference>
<dbReference type="InterPro" id="IPR018097">
    <property type="entry name" value="EGF_Ca-bd_CS"/>
</dbReference>
<dbReference type="InterPro" id="IPR011009">
    <property type="entry name" value="Kinase-like_dom_sf"/>
</dbReference>
<dbReference type="InterPro" id="IPR000719">
    <property type="entry name" value="Prot_kinase_dom"/>
</dbReference>
<dbReference type="InterPro" id="IPR008271">
    <property type="entry name" value="Ser/Thr_kinase_AS"/>
</dbReference>
<dbReference type="InterPro" id="IPR013695">
    <property type="entry name" value="WAK"/>
</dbReference>
<dbReference type="InterPro" id="IPR045274">
    <property type="entry name" value="WAK-like"/>
</dbReference>
<dbReference type="InterPro" id="IPR025287">
    <property type="entry name" value="WAK_GUB"/>
</dbReference>
<dbReference type="PANTHER" id="PTHR27005:SF471">
    <property type="entry name" value="WALL-ASSOCIATED RECEPTOR KINASE-LIKE 1-RELATED"/>
    <property type="match status" value="1"/>
</dbReference>
<dbReference type="PANTHER" id="PTHR27005">
    <property type="entry name" value="WALL-ASSOCIATED RECEPTOR KINASE-LIKE 21"/>
    <property type="match status" value="1"/>
</dbReference>
<dbReference type="Pfam" id="PF13947">
    <property type="entry name" value="GUB_WAK_bind"/>
    <property type="match status" value="1"/>
</dbReference>
<dbReference type="Pfam" id="PF00069">
    <property type="entry name" value="Pkinase"/>
    <property type="match status" value="1"/>
</dbReference>
<dbReference type="Pfam" id="PF08488">
    <property type="entry name" value="WAK"/>
    <property type="match status" value="1"/>
</dbReference>
<dbReference type="SMART" id="SM00220">
    <property type="entry name" value="S_TKc"/>
    <property type="match status" value="1"/>
</dbReference>
<dbReference type="SUPFAM" id="SSF56112">
    <property type="entry name" value="Protein kinase-like (PK-like)"/>
    <property type="match status" value="1"/>
</dbReference>
<dbReference type="PROSITE" id="PS01186">
    <property type="entry name" value="EGF_2"/>
    <property type="match status" value="1"/>
</dbReference>
<dbReference type="PROSITE" id="PS01187">
    <property type="entry name" value="EGF_CA"/>
    <property type="match status" value="1"/>
</dbReference>
<dbReference type="PROSITE" id="PS50011">
    <property type="entry name" value="PROTEIN_KINASE_DOM"/>
    <property type="match status" value="1"/>
</dbReference>
<dbReference type="PROSITE" id="PS00108">
    <property type="entry name" value="PROTEIN_KINASE_ST"/>
    <property type="match status" value="1"/>
</dbReference>
<gene>
    <name type="primary">WAKL5</name>
    <name type="ordered locus">At1g16160</name>
    <name type="ORF">T24D18.24</name>
</gene>
<comment type="function">
    <text evidence="7">Serine/threonine-protein kinase that may function as a signaling receptor of extracellular matrix component. May be involved in plant's response to pathogen infection.</text>
</comment>
<comment type="catalytic activity">
    <reaction>
        <text>L-seryl-[protein] + ATP = O-phospho-L-seryl-[protein] + ADP + H(+)</text>
        <dbReference type="Rhea" id="RHEA:17989"/>
        <dbReference type="Rhea" id="RHEA-COMP:9863"/>
        <dbReference type="Rhea" id="RHEA-COMP:11604"/>
        <dbReference type="ChEBI" id="CHEBI:15378"/>
        <dbReference type="ChEBI" id="CHEBI:29999"/>
        <dbReference type="ChEBI" id="CHEBI:30616"/>
        <dbReference type="ChEBI" id="CHEBI:83421"/>
        <dbReference type="ChEBI" id="CHEBI:456216"/>
    </reaction>
</comment>
<comment type="catalytic activity">
    <reaction>
        <text>L-threonyl-[protein] + ATP = O-phospho-L-threonyl-[protein] + ADP + H(+)</text>
        <dbReference type="Rhea" id="RHEA:46608"/>
        <dbReference type="Rhea" id="RHEA-COMP:11060"/>
        <dbReference type="Rhea" id="RHEA-COMP:11605"/>
        <dbReference type="ChEBI" id="CHEBI:15378"/>
        <dbReference type="ChEBI" id="CHEBI:30013"/>
        <dbReference type="ChEBI" id="CHEBI:30616"/>
        <dbReference type="ChEBI" id="CHEBI:61977"/>
        <dbReference type="ChEBI" id="CHEBI:456216"/>
    </reaction>
</comment>
<comment type="subcellular location">
    <subcellularLocation>
        <location evidence="8">Membrane</location>
        <topology evidence="8">Single-pass type I membrane protein</topology>
    </subcellularLocation>
</comment>
<comment type="tissue specificity">
    <text evidence="7">Preferentially expressed in roots and flowers.</text>
</comment>
<comment type="induction">
    <text evidence="7">Induced by INA and wounding.</text>
</comment>
<comment type="domain">
    <text>The EGF-like region is specific to this family of proteins and seems to consist of the C-terminal of an EGF-like domain fused to the N-terminal of another one.</text>
</comment>
<comment type="similarity">
    <text evidence="4">Belongs to the protein kinase superfamily. Ser/Thr protein kinase family.</text>
</comment>
<comment type="sequence caution" evidence="8">
    <conflict type="erroneous initiation">
        <sequence resource="EMBL-CDS" id="AAF18511"/>
    </conflict>
    <text>Truncated N-terminus.</text>
</comment>
<organism>
    <name type="scientific">Arabidopsis thaliana</name>
    <name type="common">Mouse-ear cress</name>
    <dbReference type="NCBI Taxonomy" id="3702"/>
    <lineage>
        <taxon>Eukaryota</taxon>
        <taxon>Viridiplantae</taxon>
        <taxon>Streptophyta</taxon>
        <taxon>Embryophyta</taxon>
        <taxon>Tracheophyta</taxon>
        <taxon>Spermatophyta</taxon>
        <taxon>Magnoliopsida</taxon>
        <taxon>eudicotyledons</taxon>
        <taxon>Gunneridae</taxon>
        <taxon>Pentapetalae</taxon>
        <taxon>rosids</taxon>
        <taxon>malvids</taxon>
        <taxon>Brassicales</taxon>
        <taxon>Brassicaceae</taxon>
        <taxon>Camelineae</taxon>
        <taxon>Arabidopsis</taxon>
    </lineage>
</organism>
<proteinExistence type="evidence at transcript level"/>
<feature type="signal peptide" evidence="3">
    <location>
        <begin position="1"/>
        <end position="26"/>
    </location>
</feature>
<feature type="chain" id="PRO_0000253309" description="Wall-associated receptor kinase-like 5">
    <location>
        <begin position="27"/>
        <end position="731"/>
    </location>
</feature>
<feature type="topological domain" description="Extracellular" evidence="3">
    <location>
        <begin position="27"/>
        <end position="360"/>
    </location>
</feature>
<feature type="transmembrane region" description="Helical" evidence="3">
    <location>
        <begin position="361"/>
        <end position="381"/>
    </location>
</feature>
<feature type="topological domain" description="Cytoplasmic" evidence="3">
    <location>
        <begin position="382"/>
        <end position="731"/>
    </location>
</feature>
<feature type="domain" description="Protein kinase" evidence="4">
    <location>
        <begin position="432"/>
        <end position="705"/>
    </location>
</feature>
<feature type="region of interest" description="Atypical EGF-like">
    <location>
        <begin position="285"/>
        <end position="342"/>
    </location>
</feature>
<feature type="region of interest" description="Disordered" evidence="6">
    <location>
        <begin position="709"/>
        <end position="731"/>
    </location>
</feature>
<feature type="active site" description="Proton acceptor" evidence="4 5">
    <location>
        <position position="557"/>
    </location>
</feature>
<feature type="binding site" evidence="4">
    <location>
        <begin position="438"/>
        <end position="446"/>
    </location>
    <ligand>
        <name>ATP</name>
        <dbReference type="ChEBI" id="CHEBI:30616"/>
    </ligand>
</feature>
<feature type="binding site" evidence="4">
    <location>
        <position position="460"/>
    </location>
    <ligand>
        <name>ATP</name>
        <dbReference type="ChEBI" id="CHEBI:30616"/>
    </ligand>
</feature>
<feature type="modified residue" description="Phosphotyrosine" evidence="2">
    <location>
        <position position="505"/>
    </location>
</feature>
<feature type="modified residue" description="Phosphothreonine" evidence="2">
    <location>
        <position position="591"/>
    </location>
</feature>
<feature type="modified residue" description="Phosphothreonine" evidence="2">
    <location>
        <position position="596"/>
    </location>
</feature>
<feature type="modified residue" description="Phosphotyrosine" evidence="2">
    <location>
        <position position="604"/>
    </location>
</feature>
<feature type="glycosylation site" description="N-linked (GlcNAc...) asparagine" evidence="3">
    <location>
        <position position="37"/>
    </location>
</feature>
<feature type="glycosylation site" description="N-linked (GlcNAc...) asparagine" evidence="3">
    <location>
        <position position="43"/>
    </location>
</feature>
<feature type="glycosylation site" description="N-linked (GlcNAc...) asparagine" evidence="3">
    <location>
        <position position="73"/>
    </location>
</feature>
<feature type="glycosylation site" description="N-linked (GlcNAc...) asparagine" evidence="3">
    <location>
        <position position="96"/>
    </location>
</feature>
<feature type="glycosylation site" description="N-linked (GlcNAc...) asparagine" evidence="3">
    <location>
        <position position="124"/>
    </location>
</feature>
<feature type="glycosylation site" description="N-linked (GlcNAc...) asparagine" evidence="3">
    <location>
        <position position="137"/>
    </location>
</feature>
<feature type="glycosylation site" description="N-linked (GlcNAc...) asparagine" evidence="3">
    <location>
        <position position="236"/>
    </location>
</feature>
<feature type="glycosylation site" description="N-linked (GlcNAc...) asparagine" evidence="3">
    <location>
        <position position="272"/>
    </location>
</feature>
<feature type="disulfide bond" evidence="1">
    <location>
        <begin position="287"/>
        <end position="300"/>
    </location>
</feature>
<feature type="disulfide bond" evidence="1">
    <location>
        <begin position="322"/>
        <end position="333"/>
    </location>
</feature>
<feature type="disulfide bond" evidence="1">
    <location>
        <begin position="328"/>
        <end position="342"/>
    </location>
</feature>
<name>WAKLE_ARATH</name>
<reference key="1">
    <citation type="journal article" date="2000" name="Nature">
        <title>Sequence and analysis of chromosome 1 of the plant Arabidopsis thaliana.</title>
        <authorList>
            <person name="Theologis A."/>
            <person name="Ecker J.R."/>
            <person name="Palm C.J."/>
            <person name="Federspiel N.A."/>
            <person name="Kaul S."/>
            <person name="White O."/>
            <person name="Alonso J."/>
            <person name="Altafi H."/>
            <person name="Araujo R."/>
            <person name="Bowman C.L."/>
            <person name="Brooks S.Y."/>
            <person name="Buehler E."/>
            <person name="Chan A."/>
            <person name="Chao Q."/>
            <person name="Chen H."/>
            <person name="Cheuk R.F."/>
            <person name="Chin C.W."/>
            <person name="Chung M.K."/>
            <person name="Conn L."/>
            <person name="Conway A.B."/>
            <person name="Conway A.R."/>
            <person name="Creasy T.H."/>
            <person name="Dewar K."/>
            <person name="Dunn P."/>
            <person name="Etgu P."/>
            <person name="Feldblyum T.V."/>
            <person name="Feng J.-D."/>
            <person name="Fong B."/>
            <person name="Fujii C.Y."/>
            <person name="Gill J.E."/>
            <person name="Goldsmith A.D."/>
            <person name="Haas B."/>
            <person name="Hansen N.F."/>
            <person name="Hughes B."/>
            <person name="Huizar L."/>
            <person name="Hunter J.L."/>
            <person name="Jenkins J."/>
            <person name="Johnson-Hopson C."/>
            <person name="Khan S."/>
            <person name="Khaykin E."/>
            <person name="Kim C.J."/>
            <person name="Koo H.L."/>
            <person name="Kremenetskaia I."/>
            <person name="Kurtz D.B."/>
            <person name="Kwan A."/>
            <person name="Lam B."/>
            <person name="Langin-Hooper S."/>
            <person name="Lee A."/>
            <person name="Lee J.M."/>
            <person name="Lenz C.A."/>
            <person name="Li J.H."/>
            <person name="Li Y.-P."/>
            <person name="Lin X."/>
            <person name="Liu S.X."/>
            <person name="Liu Z.A."/>
            <person name="Luros J.S."/>
            <person name="Maiti R."/>
            <person name="Marziali A."/>
            <person name="Militscher J."/>
            <person name="Miranda M."/>
            <person name="Nguyen M."/>
            <person name="Nierman W.C."/>
            <person name="Osborne B.I."/>
            <person name="Pai G."/>
            <person name="Peterson J."/>
            <person name="Pham P.K."/>
            <person name="Rizzo M."/>
            <person name="Rooney T."/>
            <person name="Rowley D."/>
            <person name="Sakano H."/>
            <person name="Salzberg S.L."/>
            <person name="Schwartz J.R."/>
            <person name="Shinn P."/>
            <person name="Southwick A.M."/>
            <person name="Sun H."/>
            <person name="Tallon L.J."/>
            <person name="Tambunga G."/>
            <person name="Toriumi M.J."/>
            <person name="Town C.D."/>
            <person name="Utterback T."/>
            <person name="Van Aken S."/>
            <person name="Vaysberg M."/>
            <person name="Vysotskaia V.S."/>
            <person name="Walker M."/>
            <person name="Wu D."/>
            <person name="Yu G."/>
            <person name="Fraser C.M."/>
            <person name="Venter J.C."/>
            <person name="Davis R.W."/>
        </authorList>
    </citation>
    <scope>NUCLEOTIDE SEQUENCE [LARGE SCALE GENOMIC DNA]</scope>
    <source>
        <strain>cv. Columbia</strain>
    </source>
</reference>
<reference key="2">
    <citation type="journal article" date="2017" name="Plant J.">
        <title>Araport11: a complete reannotation of the Arabidopsis thaliana reference genome.</title>
        <authorList>
            <person name="Cheng C.Y."/>
            <person name="Krishnakumar V."/>
            <person name="Chan A.P."/>
            <person name="Thibaud-Nissen F."/>
            <person name="Schobel S."/>
            <person name="Town C.D."/>
        </authorList>
    </citation>
    <scope>GENOME REANNOTATION</scope>
    <source>
        <strain>cv. Columbia</strain>
    </source>
</reference>
<reference key="3">
    <citation type="journal article" date="2002" name="Plant Physiol.">
        <title>The cell wall-associated kinase (WAK) and WAK-like kinase gene family.</title>
        <authorList>
            <person name="Verica J.A."/>
            <person name="He Z.-H."/>
        </authorList>
    </citation>
    <scope>GENE FAMILY ORGANIZATION</scope>
</reference>
<reference key="4">
    <citation type="journal article" date="2003" name="Plant Physiol.">
        <title>Tissue-specific and developmentally regulated expression of a cluster of tandemly arrayed cell wall-associated kinase-like kinase genes in Arabidopsis.</title>
        <authorList>
            <person name="Verica J.A."/>
            <person name="Chae L."/>
            <person name="Tong H.-Y."/>
            <person name="Ingmire P."/>
            <person name="He Z.-H."/>
        </authorList>
    </citation>
    <scope>TISSUE SPECIFICITY</scope>
    <scope>INDUCTION</scope>
    <scope>FUNCTION</scope>
</reference>
<protein>
    <recommendedName>
        <fullName>Wall-associated receptor kinase-like 5</fullName>
        <ecNumber>2.7.11.-</ecNumber>
    </recommendedName>
</protein>
<keyword id="KW-0067">ATP-binding</keyword>
<keyword id="KW-1015">Disulfide bond</keyword>
<keyword id="KW-0325">Glycoprotein</keyword>
<keyword id="KW-0418">Kinase</keyword>
<keyword id="KW-0472">Membrane</keyword>
<keyword id="KW-0547">Nucleotide-binding</keyword>
<keyword id="KW-0597">Phosphoprotein</keyword>
<keyword id="KW-1185">Reference proteome</keyword>
<keyword id="KW-0723">Serine/threonine-protein kinase</keyword>
<keyword id="KW-0732">Signal</keyword>
<keyword id="KW-0808">Transferase</keyword>
<keyword id="KW-0812">Transmembrane</keyword>
<keyword id="KW-1133">Transmembrane helix</keyword>